<sequence>MKRDIHPEYVETQVSCTCGASFTTRSTISSGTVRAEVCSECHPFYTGKQKILDTGGRVARFEARFGKAAAAKK</sequence>
<dbReference type="EMBL" id="BA000030">
    <property type="protein sequence ID" value="BAC70624.1"/>
    <property type="molecule type" value="Genomic_DNA"/>
</dbReference>
<dbReference type="RefSeq" id="WP_010984345.1">
    <property type="nucleotide sequence ID" value="NZ_JZJK01000090.1"/>
</dbReference>
<dbReference type="SMR" id="Q82J69"/>
<dbReference type="GeneID" id="41539997"/>
<dbReference type="KEGG" id="sma:SAVERM_2913"/>
<dbReference type="eggNOG" id="COG0254">
    <property type="taxonomic scope" value="Bacteria"/>
</dbReference>
<dbReference type="HOGENOM" id="CLU_114306_4_3_11"/>
<dbReference type="OrthoDB" id="9803251at2"/>
<dbReference type="Proteomes" id="UP000000428">
    <property type="component" value="Chromosome"/>
</dbReference>
<dbReference type="GO" id="GO:1990904">
    <property type="term" value="C:ribonucleoprotein complex"/>
    <property type="evidence" value="ECO:0007669"/>
    <property type="project" value="UniProtKB-KW"/>
</dbReference>
<dbReference type="GO" id="GO:0005840">
    <property type="term" value="C:ribosome"/>
    <property type="evidence" value="ECO:0007669"/>
    <property type="project" value="UniProtKB-KW"/>
</dbReference>
<dbReference type="GO" id="GO:0046872">
    <property type="term" value="F:metal ion binding"/>
    <property type="evidence" value="ECO:0007669"/>
    <property type="project" value="UniProtKB-KW"/>
</dbReference>
<dbReference type="GO" id="GO:0019843">
    <property type="term" value="F:rRNA binding"/>
    <property type="evidence" value="ECO:0007669"/>
    <property type="project" value="UniProtKB-KW"/>
</dbReference>
<dbReference type="GO" id="GO:0003735">
    <property type="term" value="F:structural constituent of ribosome"/>
    <property type="evidence" value="ECO:0007669"/>
    <property type="project" value="InterPro"/>
</dbReference>
<dbReference type="GO" id="GO:0006412">
    <property type="term" value="P:translation"/>
    <property type="evidence" value="ECO:0007669"/>
    <property type="project" value="UniProtKB-UniRule"/>
</dbReference>
<dbReference type="Gene3D" id="4.10.830.30">
    <property type="entry name" value="Ribosomal protein L31"/>
    <property type="match status" value="1"/>
</dbReference>
<dbReference type="HAMAP" id="MF_00501">
    <property type="entry name" value="Ribosomal_bL31_1"/>
    <property type="match status" value="1"/>
</dbReference>
<dbReference type="InterPro" id="IPR034704">
    <property type="entry name" value="Ribosomal_bL28/bL31-like_sf"/>
</dbReference>
<dbReference type="InterPro" id="IPR002150">
    <property type="entry name" value="Ribosomal_bL31"/>
</dbReference>
<dbReference type="InterPro" id="IPR027491">
    <property type="entry name" value="Ribosomal_bL31_A"/>
</dbReference>
<dbReference type="InterPro" id="IPR042105">
    <property type="entry name" value="Ribosomal_bL31_sf"/>
</dbReference>
<dbReference type="NCBIfam" id="TIGR00105">
    <property type="entry name" value="L31"/>
    <property type="match status" value="1"/>
</dbReference>
<dbReference type="NCBIfam" id="NF000612">
    <property type="entry name" value="PRK00019.1"/>
    <property type="match status" value="1"/>
</dbReference>
<dbReference type="NCBIfam" id="NF001809">
    <property type="entry name" value="PRK00528.1"/>
    <property type="match status" value="1"/>
</dbReference>
<dbReference type="PANTHER" id="PTHR33280">
    <property type="entry name" value="50S RIBOSOMAL PROTEIN L31, CHLOROPLASTIC"/>
    <property type="match status" value="1"/>
</dbReference>
<dbReference type="PANTHER" id="PTHR33280:SF1">
    <property type="entry name" value="LARGE RIBOSOMAL SUBUNIT PROTEIN BL31C"/>
    <property type="match status" value="1"/>
</dbReference>
<dbReference type="Pfam" id="PF01197">
    <property type="entry name" value="Ribosomal_L31"/>
    <property type="match status" value="1"/>
</dbReference>
<dbReference type="PRINTS" id="PR01249">
    <property type="entry name" value="RIBOSOMALL31"/>
</dbReference>
<dbReference type="SUPFAM" id="SSF143800">
    <property type="entry name" value="L28p-like"/>
    <property type="match status" value="1"/>
</dbReference>
<dbReference type="PROSITE" id="PS01143">
    <property type="entry name" value="RIBOSOMAL_L31"/>
    <property type="match status" value="1"/>
</dbReference>
<name>RL31_STRAW</name>
<proteinExistence type="inferred from homology"/>
<accession>Q82J69</accession>
<keyword id="KW-0479">Metal-binding</keyword>
<keyword id="KW-1185">Reference proteome</keyword>
<keyword id="KW-0687">Ribonucleoprotein</keyword>
<keyword id="KW-0689">Ribosomal protein</keyword>
<keyword id="KW-0694">RNA-binding</keyword>
<keyword id="KW-0699">rRNA-binding</keyword>
<keyword id="KW-0862">Zinc</keyword>
<evidence type="ECO:0000255" key="1">
    <source>
        <dbReference type="HAMAP-Rule" id="MF_00501"/>
    </source>
</evidence>
<evidence type="ECO:0000305" key="2"/>
<comment type="function">
    <text evidence="1">Binds the 23S rRNA.</text>
</comment>
<comment type="cofactor">
    <cofactor evidence="1">
        <name>Zn(2+)</name>
        <dbReference type="ChEBI" id="CHEBI:29105"/>
    </cofactor>
    <text evidence="1">Binds 1 zinc ion per subunit.</text>
</comment>
<comment type="subunit">
    <text evidence="1">Part of the 50S ribosomal subunit.</text>
</comment>
<comment type="similarity">
    <text evidence="1">Belongs to the bacterial ribosomal protein bL31 family. Type A subfamily.</text>
</comment>
<protein>
    <recommendedName>
        <fullName evidence="1">Large ribosomal subunit protein bL31</fullName>
    </recommendedName>
    <alternativeName>
        <fullName evidence="2">50S ribosomal protein L31</fullName>
    </alternativeName>
</protein>
<reference key="1">
    <citation type="journal article" date="2001" name="Proc. Natl. Acad. Sci. U.S.A.">
        <title>Genome sequence of an industrial microorganism Streptomyces avermitilis: deducing the ability of producing secondary metabolites.</title>
        <authorList>
            <person name="Omura S."/>
            <person name="Ikeda H."/>
            <person name="Ishikawa J."/>
            <person name="Hanamoto A."/>
            <person name="Takahashi C."/>
            <person name="Shinose M."/>
            <person name="Takahashi Y."/>
            <person name="Horikawa H."/>
            <person name="Nakazawa H."/>
            <person name="Osonoe T."/>
            <person name="Kikuchi H."/>
            <person name="Shiba T."/>
            <person name="Sakaki Y."/>
            <person name="Hattori M."/>
        </authorList>
    </citation>
    <scope>NUCLEOTIDE SEQUENCE [LARGE SCALE GENOMIC DNA]</scope>
    <source>
        <strain>ATCC 31267 / DSM 46492 / JCM 5070 / NBRC 14893 / NCIMB 12804 / NRRL 8165 / MA-4680</strain>
    </source>
</reference>
<reference key="2">
    <citation type="journal article" date="2003" name="Nat. Biotechnol.">
        <title>Complete genome sequence and comparative analysis of the industrial microorganism Streptomyces avermitilis.</title>
        <authorList>
            <person name="Ikeda H."/>
            <person name="Ishikawa J."/>
            <person name="Hanamoto A."/>
            <person name="Shinose M."/>
            <person name="Kikuchi H."/>
            <person name="Shiba T."/>
            <person name="Sakaki Y."/>
            <person name="Hattori M."/>
            <person name="Omura S."/>
        </authorList>
    </citation>
    <scope>NUCLEOTIDE SEQUENCE [LARGE SCALE GENOMIC DNA]</scope>
    <source>
        <strain>ATCC 31267 / DSM 46492 / JCM 5070 / NBRC 14893 / NCIMB 12804 / NRRL 8165 / MA-4680</strain>
    </source>
</reference>
<organism>
    <name type="scientific">Streptomyces avermitilis (strain ATCC 31267 / DSM 46492 / JCM 5070 / NBRC 14893 / NCIMB 12804 / NRRL 8165 / MA-4680)</name>
    <dbReference type="NCBI Taxonomy" id="227882"/>
    <lineage>
        <taxon>Bacteria</taxon>
        <taxon>Bacillati</taxon>
        <taxon>Actinomycetota</taxon>
        <taxon>Actinomycetes</taxon>
        <taxon>Kitasatosporales</taxon>
        <taxon>Streptomycetaceae</taxon>
        <taxon>Streptomyces</taxon>
    </lineage>
</organism>
<feature type="chain" id="PRO_0000173163" description="Large ribosomal subunit protein bL31">
    <location>
        <begin position="1"/>
        <end position="73"/>
    </location>
</feature>
<feature type="binding site" evidence="1">
    <location>
        <position position="16"/>
    </location>
    <ligand>
        <name>Zn(2+)</name>
        <dbReference type="ChEBI" id="CHEBI:29105"/>
    </ligand>
</feature>
<feature type="binding site" evidence="1">
    <location>
        <position position="18"/>
    </location>
    <ligand>
        <name>Zn(2+)</name>
        <dbReference type="ChEBI" id="CHEBI:29105"/>
    </ligand>
</feature>
<feature type="binding site" evidence="1">
    <location>
        <position position="38"/>
    </location>
    <ligand>
        <name>Zn(2+)</name>
        <dbReference type="ChEBI" id="CHEBI:29105"/>
    </ligand>
</feature>
<feature type="binding site" evidence="1">
    <location>
        <position position="41"/>
    </location>
    <ligand>
        <name>Zn(2+)</name>
        <dbReference type="ChEBI" id="CHEBI:29105"/>
    </ligand>
</feature>
<gene>
    <name evidence="1" type="primary">rpmE</name>
    <name type="ordered locus">SAV_2913</name>
</gene>